<evidence type="ECO:0000250" key="1">
    <source>
        <dbReference type="UniProtKB" id="P62906"/>
    </source>
</evidence>
<evidence type="ECO:0000305" key="2"/>
<keyword id="KW-0963">Cytoplasm</keyword>
<keyword id="KW-1185">Reference proteome</keyword>
<keyword id="KW-0687">Ribonucleoprotein</keyword>
<keyword id="KW-0689">Ribosomal protein</keyword>
<proteinExistence type="evidence at transcript level"/>
<organism>
    <name type="scientific">Xenopus laevis</name>
    <name type="common">African clawed frog</name>
    <dbReference type="NCBI Taxonomy" id="8355"/>
    <lineage>
        <taxon>Eukaryota</taxon>
        <taxon>Metazoa</taxon>
        <taxon>Chordata</taxon>
        <taxon>Craniata</taxon>
        <taxon>Vertebrata</taxon>
        <taxon>Euteleostomi</taxon>
        <taxon>Amphibia</taxon>
        <taxon>Batrachia</taxon>
        <taxon>Anura</taxon>
        <taxon>Pipoidea</taxon>
        <taxon>Pipidae</taxon>
        <taxon>Xenopodinae</taxon>
        <taxon>Xenopus</taxon>
        <taxon>Xenopus</taxon>
    </lineage>
</organism>
<name>RL10A_XENLA</name>
<gene>
    <name type="primary">rpl10a</name>
</gene>
<dbReference type="EMBL" id="BC041308">
    <property type="protein sequence ID" value="AAH41308.1"/>
    <property type="molecule type" value="mRNA"/>
</dbReference>
<dbReference type="RefSeq" id="NP_001080205.1">
    <property type="nucleotide sequence ID" value="NM_001086736.1"/>
</dbReference>
<dbReference type="SMR" id="Q7ZYS8"/>
<dbReference type="BioGRID" id="98139">
    <property type="interactions" value="3"/>
</dbReference>
<dbReference type="IntAct" id="Q7ZYS8">
    <property type="interactions" value="1"/>
</dbReference>
<dbReference type="DNASU" id="379897"/>
<dbReference type="GeneID" id="379897"/>
<dbReference type="KEGG" id="xla:379897"/>
<dbReference type="AGR" id="Xenbase:XB-GENE-974211"/>
<dbReference type="CTD" id="379897"/>
<dbReference type="Xenbase" id="XB-GENE-974211">
    <property type="gene designation" value="rpl10a.S"/>
</dbReference>
<dbReference type="OrthoDB" id="2449818at2759"/>
<dbReference type="CD-CODE" id="78E86D56">
    <property type="entry name" value="Mitochondrial cloud"/>
</dbReference>
<dbReference type="Proteomes" id="UP000186698">
    <property type="component" value="Chromosome 2S"/>
</dbReference>
<dbReference type="Bgee" id="379897">
    <property type="expression patterns" value="Expressed in intestine and 19 other cell types or tissues"/>
</dbReference>
<dbReference type="GO" id="GO:0022625">
    <property type="term" value="C:cytosolic large ribosomal subunit"/>
    <property type="evidence" value="ECO:0000318"/>
    <property type="project" value="GO_Central"/>
</dbReference>
<dbReference type="GO" id="GO:0003723">
    <property type="term" value="F:RNA binding"/>
    <property type="evidence" value="ECO:0000318"/>
    <property type="project" value="GO_Central"/>
</dbReference>
<dbReference type="GO" id="GO:0003735">
    <property type="term" value="F:structural constituent of ribosome"/>
    <property type="evidence" value="ECO:0007669"/>
    <property type="project" value="InterPro"/>
</dbReference>
<dbReference type="GO" id="GO:0006412">
    <property type="term" value="P:translation"/>
    <property type="evidence" value="ECO:0007669"/>
    <property type="project" value="InterPro"/>
</dbReference>
<dbReference type="CDD" id="cd00403">
    <property type="entry name" value="Ribosomal_L1"/>
    <property type="match status" value="1"/>
</dbReference>
<dbReference type="FunFam" id="3.30.190.20:FF:000006">
    <property type="entry name" value="Ribosomal protein"/>
    <property type="match status" value="1"/>
</dbReference>
<dbReference type="FunFam" id="3.40.50.790:FF:000002">
    <property type="entry name" value="Ribosomal protein"/>
    <property type="match status" value="1"/>
</dbReference>
<dbReference type="FunFam" id="3.30.190.20:FF:000009">
    <property type="entry name" value="Ribosomal protein L10a"/>
    <property type="match status" value="1"/>
</dbReference>
<dbReference type="Gene3D" id="3.30.190.20">
    <property type="match status" value="1"/>
</dbReference>
<dbReference type="Gene3D" id="3.40.50.790">
    <property type="match status" value="1"/>
</dbReference>
<dbReference type="InterPro" id="IPR050257">
    <property type="entry name" value="eL8/uL1-like"/>
</dbReference>
<dbReference type="InterPro" id="IPR002143">
    <property type="entry name" value="Ribosomal_uL1"/>
</dbReference>
<dbReference type="InterPro" id="IPR023674">
    <property type="entry name" value="Ribosomal_uL1-like"/>
</dbReference>
<dbReference type="InterPro" id="IPR028364">
    <property type="entry name" value="Ribosomal_uL1/biogenesis"/>
</dbReference>
<dbReference type="InterPro" id="IPR016095">
    <property type="entry name" value="Ribosomal_uL1_3-a/b-sand"/>
</dbReference>
<dbReference type="InterPro" id="IPR023673">
    <property type="entry name" value="Ribosomal_uL1_CS"/>
</dbReference>
<dbReference type="PANTHER" id="PTHR23105">
    <property type="entry name" value="RIBOSOMAL PROTEIN L7AE FAMILY MEMBER"/>
    <property type="match status" value="1"/>
</dbReference>
<dbReference type="Pfam" id="PF00687">
    <property type="entry name" value="Ribosomal_L1"/>
    <property type="match status" value="1"/>
</dbReference>
<dbReference type="PIRSF" id="PIRSF002155">
    <property type="entry name" value="Ribosomal_L1"/>
    <property type="match status" value="1"/>
</dbReference>
<dbReference type="SUPFAM" id="SSF56808">
    <property type="entry name" value="Ribosomal protein L1"/>
    <property type="match status" value="1"/>
</dbReference>
<dbReference type="PROSITE" id="PS01199">
    <property type="entry name" value="RIBOSOMAL_L1"/>
    <property type="match status" value="1"/>
</dbReference>
<sequence length="217" mass="24775">MSSKVSRDTLYEAVREVLQGSKKKKRKFLETVELQISLKNYDPQKDKRFSGTVRLKSTPRPKFSLCVLGDQQHCDEAKAVDLPHMDIEALKKLNKNKKLVKKLAKKYDAFLASESLIKQIPRILGPGLNKAGKFPSLLTHNENLVAKVDEVKSTIKFQMKKVLCLAVAVGHVKLTEEELVYNIHLSINFLVSLLKKNWQNVRALYIKSTMGKPQRLY</sequence>
<reference key="1">
    <citation type="submission" date="2002-12" db="EMBL/GenBank/DDBJ databases">
        <authorList>
            <consortium name="NIH - Xenopus Gene Collection (XGC) project"/>
        </authorList>
    </citation>
    <scope>NUCLEOTIDE SEQUENCE [LARGE SCALE MRNA]</scope>
    <source>
        <tissue>Embryo</tissue>
    </source>
</reference>
<comment type="function">
    <text evidence="1">Component of the large ribosomal subunit. The ribosome is a large ribonucleoprotein complex responsible for the synthesis of proteins in the cell.</text>
</comment>
<comment type="subunit">
    <text evidence="1">Component of the large ribosomal subunit.</text>
</comment>
<comment type="subcellular location">
    <subcellularLocation>
        <location evidence="1">Cytoplasm</location>
    </subcellularLocation>
</comment>
<comment type="similarity">
    <text evidence="2">Belongs to the universal ribosomal protein uL1 family.</text>
</comment>
<accession>Q7ZYS8</accession>
<protein>
    <recommendedName>
        <fullName evidence="2">Large ribosomal subunit protein uL1</fullName>
    </recommendedName>
    <alternativeName>
        <fullName>60S ribosomal protein L10a</fullName>
    </alternativeName>
</protein>
<feature type="chain" id="PRO_0000125823" description="Large ribosomal subunit protein uL1">
    <location>
        <begin position="1"/>
        <end position="217"/>
    </location>
</feature>